<dbReference type="EC" id="3.1.1.4"/>
<dbReference type="EMBL" id="AF184140">
    <property type="protein sequence ID" value="AAD56563.1"/>
    <property type="molecule type" value="mRNA"/>
</dbReference>
<dbReference type="SMR" id="Q9PUH0"/>
<dbReference type="GO" id="GO:0005576">
    <property type="term" value="C:extracellular region"/>
    <property type="evidence" value="ECO:0007669"/>
    <property type="project" value="UniProtKB-SubCell"/>
</dbReference>
<dbReference type="GO" id="GO:0005509">
    <property type="term" value="F:calcium ion binding"/>
    <property type="evidence" value="ECO:0007669"/>
    <property type="project" value="InterPro"/>
</dbReference>
<dbReference type="GO" id="GO:0047498">
    <property type="term" value="F:calcium-dependent phospholipase A2 activity"/>
    <property type="evidence" value="ECO:0007669"/>
    <property type="project" value="TreeGrafter"/>
</dbReference>
<dbReference type="GO" id="GO:0005543">
    <property type="term" value="F:phospholipid binding"/>
    <property type="evidence" value="ECO:0007669"/>
    <property type="project" value="TreeGrafter"/>
</dbReference>
<dbReference type="GO" id="GO:0090729">
    <property type="term" value="F:toxin activity"/>
    <property type="evidence" value="ECO:0007669"/>
    <property type="project" value="UniProtKB-KW"/>
</dbReference>
<dbReference type="GO" id="GO:0050482">
    <property type="term" value="P:arachidonate secretion"/>
    <property type="evidence" value="ECO:0007669"/>
    <property type="project" value="InterPro"/>
</dbReference>
<dbReference type="GO" id="GO:0016042">
    <property type="term" value="P:lipid catabolic process"/>
    <property type="evidence" value="ECO:0007669"/>
    <property type="project" value="UniProtKB-KW"/>
</dbReference>
<dbReference type="GO" id="GO:0006644">
    <property type="term" value="P:phospholipid metabolic process"/>
    <property type="evidence" value="ECO:0007669"/>
    <property type="project" value="InterPro"/>
</dbReference>
<dbReference type="CDD" id="cd00125">
    <property type="entry name" value="PLA2c"/>
    <property type="match status" value="1"/>
</dbReference>
<dbReference type="FunFam" id="1.20.90.10:FF:000007">
    <property type="entry name" value="Acidic phospholipase A2"/>
    <property type="match status" value="1"/>
</dbReference>
<dbReference type="Gene3D" id="1.20.90.10">
    <property type="entry name" value="Phospholipase A2 domain"/>
    <property type="match status" value="1"/>
</dbReference>
<dbReference type="InterPro" id="IPR001211">
    <property type="entry name" value="PLipase_A2"/>
</dbReference>
<dbReference type="InterPro" id="IPR033112">
    <property type="entry name" value="PLipase_A2_Asp_AS"/>
</dbReference>
<dbReference type="InterPro" id="IPR016090">
    <property type="entry name" value="PLipase_A2_dom"/>
</dbReference>
<dbReference type="InterPro" id="IPR036444">
    <property type="entry name" value="PLipase_A2_dom_sf"/>
</dbReference>
<dbReference type="InterPro" id="IPR033113">
    <property type="entry name" value="PLipase_A2_His_AS"/>
</dbReference>
<dbReference type="PANTHER" id="PTHR11716:SF51">
    <property type="entry name" value="PHOSPHOLIPASE A2"/>
    <property type="match status" value="1"/>
</dbReference>
<dbReference type="PANTHER" id="PTHR11716">
    <property type="entry name" value="PHOSPHOLIPASE A2 FAMILY MEMBER"/>
    <property type="match status" value="1"/>
</dbReference>
<dbReference type="Pfam" id="PF00068">
    <property type="entry name" value="Phospholip_A2_1"/>
    <property type="match status" value="1"/>
</dbReference>
<dbReference type="PRINTS" id="PR00389">
    <property type="entry name" value="PHPHLIPASEA2"/>
</dbReference>
<dbReference type="SMART" id="SM00085">
    <property type="entry name" value="PA2c"/>
    <property type="match status" value="1"/>
</dbReference>
<dbReference type="SUPFAM" id="SSF48619">
    <property type="entry name" value="Phospholipase A2, PLA2"/>
    <property type="match status" value="1"/>
</dbReference>
<dbReference type="PROSITE" id="PS00119">
    <property type="entry name" value="PA2_ASP"/>
    <property type="match status" value="1"/>
</dbReference>
<dbReference type="PROSITE" id="PS00118">
    <property type="entry name" value="PA2_HIS"/>
    <property type="match status" value="1"/>
</dbReference>
<evidence type="ECO:0000250" key="1"/>
<evidence type="ECO:0000255" key="2"/>
<evidence type="ECO:0000255" key="3">
    <source>
        <dbReference type="PROSITE-ProRule" id="PRU10035"/>
    </source>
</evidence>
<evidence type="ECO:0000255" key="4">
    <source>
        <dbReference type="PROSITE-ProRule" id="PRU10036"/>
    </source>
</evidence>
<evidence type="ECO:0000305" key="5"/>
<proteinExistence type="evidence at transcript level"/>
<comment type="function">
    <text evidence="1">Snake venom phospholipase A2 (PLA2) that inhibits collagen-induced platelet aggregation. PLA2 catalyzes the calcium-dependent hydrolysis of the 2-acyl groups in 3-sn-phosphoglycerides (By similarity).</text>
</comment>
<comment type="catalytic activity">
    <reaction evidence="3 4">
        <text>a 1,2-diacyl-sn-glycero-3-phosphocholine + H2O = a 1-acyl-sn-glycero-3-phosphocholine + a fatty acid + H(+)</text>
        <dbReference type="Rhea" id="RHEA:15801"/>
        <dbReference type="ChEBI" id="CHEBI:15377"/>
        <dbReference type="ChEBI" id="CHEBI:15378"/>
        <dbReference type="ChEBI" id="CHEBI:28868"/>
        <dbReference type="ChEBI" id="CHEBI:57643"/>
        <dbReference type="ChEBI" id="CHEBI:58168"/>
        <dbReference type="EC" id="3.1.1.4"/>
    </reaction>
</comment>
<comment type="cofactor">
    <cofactor evidence="1">
        <name>Ca(2+)</name>
        <dbReference type="ChEBI" id="CHEBI:29108"/>
    </cofactor>
    <text evidence="1">Binds 1 Ca(2+) ion.</text>
</comment>
<comment type="subcellular location">
    <subcellularLocation>
        <location evidence="1">Secreted</location>
    </subcellularLocation>
</comment>
<comment type="tissue specificity">
    <text>Expressed by the venom gland.</text>
</comment>
<comment type="similarity">
    <text evidence="5">Belongs to the phospholipase A2 family. Group I subfamily. D49 sub-subfamily.</text>
</comment>
<organism>
    <name type="scientific">Austrelaps superbus</name>
    <name type="common">Lowland copperhead snake</name>
    <name type="synonym">Hoplocephalus superbus</name>
    <dbReference type="NCBI Taxonomy" id="29156"/>
    <lineage>
        <taxon>Eukaryota</taxon>
        <taxon>Metazoa</taxon>
        <taxon>Chordata</taxon>
        <taxon>Craniata</taxon>
        <taxon>Vertebrata</taxon>
        <taxon>Euteleostomi</taxon>
        <taxon>Lepidosauria</taxon>
        <taxon>Squamata</taxon>
        <taxon>Bifurcata</taxon>
        <taxon>Unidentata</taxon>
        <taxon>Episquamata</taxon>
        <taxon>Toxicofera</taxon>
        <taxon>Serpentes</taxon>
        <taxon>Colubroidea</taxon>
        <taxon>Elapidae</taxon>
        <taxon>Hydrophiinae</taxon>
        <taxon>Austrelaps</taxon>
    </lineage>
</organism>
<keyword id="KW-0106">Calcium</keyword>
<keyword id="KW-1015">Disulfide bond</keyword>
<keyword id="KW-1199">Hemostasis impairing toxin</keyword>
<keyword id="KW-0378">Hydrolase</keyword>
<keyword id="KW-0442">Lipid degradation</keyword>
<keyword id="KW-0443">Lipid metabolism</keyword>
<keyword id="KW-0479">Metal-binding</keyword>
<keyword id="KW-1201">Platelet aggregation inhibiting toxin</keyword>
<keyword id="KW-0964">Secreted</keyword>
<keyword id="KW-0732">Signal</keyword>
<keyword id="KW-0800">Toxin</keyword>
<reference key="1">
    <citation type="journal article" date="2000" name="Arch. Biochem. Biophys.">
        <title>Phospholipase A(2) with platelet aggregation inhibitor activity from Austrelaps superbus venom: protein purification and cDNA cloning.</title>
        <authorList>
            <person name="Singh S.B."/>
            <person name="Armugam A."/>
            <person name="Kini R.M."/>
            <person name="Jeyaseelan K."/>
        </authorList>
    </citation>
    <scope>NUCLEOTIDE SEQUENCE [MRNA]</scope>
    <source>
        <tissue>Venom gland</tissue>
    </source>
</reference>
<name>PA2AE_AUSSU</name>
<sequence length="146" mass="16212">MYPAHLLVLLAVCVSLLGAASIPPQPLNLVQFSYLIQCANHGSRATWHYTDYGCYCGSGGSGTPVDELDRCCQTHDNCYGEAEKKGCYPKMSAYDYYCGGDGPYCRNIRKECQRFVCDCDAIAAKCFARAPYNDANWDIDTETRCQ</sequence>
<feature type="signal peptide" evidence="2">
    <location>
        <begin position="1"/>
        <end position="19"/>
    </location>
</feature>
<feature type="propeptide" id="PRO_0000022811" evidence="2">
    <location>
        <begin position="20"/>
        <end position="27"/>
    </location>
</feature>
<feature type="chain" id="PRO_0000022812" description="Acidic phospholipase A2 S8-51">
    <location>
        <begin position="28"/>
        <end position="146"/>
    </location>
</feature>
<feature type="active site" evidence="1">
    <location>
        <position position="75"/>
    </location>
</feature>
<feature type="active site" evidence="1">
    <location>
        <position position="120"/>
    </location>
</feature>
<feature type="binding site" evidence="1">
    <location>
        <position position="55"/>
    </location>
    <ligand>
        <name>Ca(2+)</name>
        <dbReference type="ChEBI" id="CHEBI:29108"/>
    </ligand>
</feature>
<feature type="binding site" evidence="1">
    <location>
        <position position="57"/>
    </location>
    <ligand>
        <name>Ca(2+)</name>
        <dbReference type="ChEBI" id="CHEBI:29108"/>
    </ligand>
</feature>
<feature type="binding site" evidence="1">
    <location>
        <position position="59"/>
    </location>
    <ligand>
        <name>Ca(2+)</name>
        <dbReference type="ChEBI" id="CHEBI:29108"/>
    </ligand>
</feature>
<feature type="binding site" evidence="1">
    <location>
        <position position="76"/>
    </location>
    <ligand>
        <name>Ca(2+)</name>
        <dbReference type="ChEBI" id="CHEBI:29108"/>
    </ligand>
</feature>
<feature type="disulfide bond" evidence="1">
    <location>
        <begin position="38"/>
        <end position="98"/>
    </location>
</feature>
<feature type="disulfide bond" evidence="1">
    <location>
        <begin position="54"/>
        <end position="145"/>
    </location>
</feature>
<feature type="disulfide bond" evidence="1">
    <location>
        <begin position="56"/>
        <end position="72"/>
    </location>
</feature>
<feature type="disulfide bond" evidence="1">
    <location>
        <begin position="71"/>
        <end position="126"/>
    </location>
</feature>
<feature type="disulfide bond" evidence="1">
    <location>
        <begin position="78"/>
        <end position="119"/>
    </location>
</feature>
<feature type="disulfide bond" evidence="1">
    <location>
        <begin position="87"/>
        <end position="112"/>
    </location>
</feature>
<feature type="disulfide bond" evidence="1">
    <location>
        <begin position="105"/>
        <end position="117"/>
    </location>
</feature>
<protein>
    <recommendedName>
        <fullName>Acidic phospholipase A2 S8-51</fullName>
        <shortName>svPLA2</shortName>
        <ecNumber>3.1.1.4</ecNumber>
    </recommendedName>
    <alternativeName>
        <fullName>ASPLA14</fullName>
    </alternativeName>
    <alternativeName>
        <fullName>Phosphatidylcholine 2-acylhydrolase</fullName>
    </alternativeName>
</protein>
<accession>Q9PUH0</accession>